<gene>
    <name type="ordered locus">PMT9312_1176</name>
</gene>
<proteinExistence type="inferred from homology"/>
<sequence>MDFRVLLVISPIIFAWIFTVFWLGKWDVFRLTPFGLPKRGVAPFENYQVWGDSAVVPNTGRPSEGYPVFTVRTAAVNALGIPTVFFLGAILAMQFKSY</sequence>
<accession>Q31A60</accession>
<reference key="1">
    <citation type="journal article" date="2006" name="Science">
        <title>Genomic islands and the ecology and evolution of Prochlorococcus.</title>
        <authorList>
            <person name="Coleman M.L."/>
            <person name="Sullivan M.B."/>
            <person name="Martiny A.C."/>
            <person name="Steglich C."/>
            <person name="Barry K."/>
            <person name="Delong E.F."/>
            <person name="Chisholm S.W."/>
        </authorList>
    </citation>
    <scope>NUCLEOTIDE SEQUENCE [LARGE SCALE GENOMIC DNA]</scope>
    <source>
        <strain>MIT 9312</strain>
    </source>
</reference>
<protein>
    <recommendedName>
        <fullName>PsbF-like protein</fullName>
    </recommendedName>
</protein>
<organism>
    <name type="scientific">Prochlorococcus marinus (strain MIT 9312)</name>
    <dbReference type="NCBI Taxonomy" id="74546"/>
    <lineage>
        <taxon>Bacteria</taxon>
        <taxon>Bacillati</taxon>
        <taxon>Cyanobacteriota</taxon>
        <taxon>Cyanophyceae</taxon>
        <taxon>Synechococcales</taxon>
        <taxon>Prochlorococcaceae</taxon>
        <taxon>Prochlorococcus</taxon>
    </lineage>
</organism>
<dbReference type="EMBL" id="CP000111">
    <property type="protein sequence ID" value="ABB50235.1"/>
    <property type="molecule type" value="Genomic_DNA"/>
</dbReference>
<dbReference type="RefSeq" id="WP_011376725.1">
    <property type="nucleotide sequence ID" value="NC_007577.1"/>
</dbReference>
<dbReference type="SMR" id="Q31A60"/>
<dbReference type="STRING" id="74546.PMT9312_1176"/>
<dbReference type="KEGG" id="pmi:PMT9312_1176"/>
<dbReference type="HOGENOM" id="CLU_2344357_0_0_3"/>
<dbReference type="OrthoDB" id="560259at2"/>
<dbReference type="Proteomes" id="UP000002715">
    <property type="component" value="Chromosome"/>
</dbReference>
<dbReference type="GO" id="GO:0016020">
    <property type="term" value="C:membrane"/>
    <property type="evidence" value="ECO:0007669"/>
    <property type="project" value="UniProtKB-SubCell"/>
</dbReference>
<dbReference type="GO" id="GO:0015979">
    <property type="term" value="P:photosynthesis"/>
    <property type="evidence" value="ECO:0007669"/>
    <property type="project" value="InterPro"/>
</dbReference>
<dbReference type="InterPro" id="IPR013081">
    <property type="entry name" value="PSII_cyt_b559_N"/>
</dbReference>
<dbReference type="NCBIfam" id="NF002720">
    <property type="entry name" value="PRK02561.1-4"/>
    <property type="match status" value="1"/>
</dbReference>
<dbReference type="Pfam" id="PF00283">
    <property type="entry name" value="Cytochrom_B559"/>
    <property type="match status" value="1"/>
</dbReference>
<dbReference type="SUPFAM" id="SSF161045">
    <property type="entry name" value="Cytochrome b559 subunits"/>
    <property type="match status" value="1"/>
</dbReference>
<comment type="function">
    <text>Unknown. Resembles PsbF, one of the subunits of the photosystem II reaction center. However, it encodes asparagine rather than histidine at the site PsbF uses to bind heme.</text>
</comment>
<comment type="subcellular location">
    <subcellularLocation>
        <location evidence="2">Membrane</location>
        <topology evidence="2">Multi-pass membrane protein</topology>
    </subcellularLocation>
</comment>
<comment type="similarity">
    <text evidence="2">Belongs to the PsbE/PsbF family.</text>
</comment>
<keyword id="KW-0472">Membrane</keyword>
<keyword id="KW-0812">Transmembrane</keyword>
<keyword id="KW-1133">Transmembrane helix</keyword>
<evidence type="ECO:0000255" key="1"/>
<evidence type="ECO:0000305" key="2"/>
<name>PSBFL_PROM9</name>
<feature type="chain" id="PRO_0000233632" description="PsbF-like protein">
    <location>
        <begin position="1"/>
        <end position="98"/>
    </location>
</feature>
<feature type="transmembrane region" description="Helical" evidence="1">
    <location>
        <begin position="5"/>
        <end position="25"/>
    </location>
</feature>
<feature type="transmembrane region" description="Helical" evidence="1">
    <location>
        <begin position="73"/>
        <end position="93"/>
    </location>
</feature>